<dbReference type="EC" id="2.7.7.4" evidence="1"/>
<dbReference type="EMBL" id="CP000075">
    <property type="protein sequence ID" value="AAY39158.1"/>
    <property type="molecule type" value="Genomic_DNA"/>
</dbReference>
<dbReference type="RefSeq" id="WP_003313577.1">
    <property type="nucleotide sequence ID" value="NC_007005.1"/>
</dbReference>
<dbReference type="RefSeq" id="YP_237196.1">
    <property type="nucleotide sequence ID" value="NC_007005.1"/>
</dbReference>
<dbReference type="SMR" id="Q4ZNW4"/>
<dbReference type="STRING" id="205918.Psyr_4128"/>
<dbReference type="GeneID" id="96220607"/>
<dbReference type="KEGG" id="psb:Psyr_4128"/>
<dbReference type="PATRIC" id="fig|205918.7.peg.4247"/>
<dbReference type="eggNOG" id="COG0175">
    <property type="taxonomic scope" value="Bacteria"/>
</dbReference>
<dbReference type="HOGENOM" id="CLU_043026_0_0_6"/>
<dbReference type="OrthoDB" id="9772604at2"/>
<dbReference type="UniPathway" id="UPA00140">
    <property type="reaction ID" value="UER00204"/>
</dbReference>
<dbReference type="Proteomes" id="UP000000426">
    <property type="component" value="Chromosome"/>
</dbReference>
<dbReference type="GO" id="GO:0005524">
    <property type="term" value="F:ATP binding"/>
    <property type="evidence" value="ECO:0007669"/>
    <property type="project" value="UniProtKB-KW"/>
</dbReference>
<dbReference type="GO" id="GO:0004781">
    <property type="term" value="F:sulfate adenylyltransferase (ATP) activity"/>
    <property type="evidence" value="ECO:0007669"/>
    <property type="project" value="UniProtKB-UniRule"/>
</dbReference>
<dbReference type="GO" id="GO:0070814">
    <property type="term" value="P:hydrogen sulfide biosynthetic process"/>
    <property type="evidence" value="ECO:0007669"/>
    <property type="project" value="UniProtKB-UniRule"/>
</dbReference>
<dbReference type="GO" id="GO:0000103">
    <property type="term" value="P:sulfate assimilation"/>
    <property type="evidence" value="ECO:0007669"/>
    <property type="project" value="UniProtKB-UniRule"/>
</dbReference>
<dbReference type="CDD" id="cd23946">
    <property type="entry name" value="Sulfate_adenylyltransferase_2"/>
    <property type="match status" value="1"/>
</dbReference>
<dbReference type="FunFam" id="3.40.50.620:FF:000002">
    <property type="entry name" value="Sulfate adenylyltransferase subunit 2"/>
    <property type="match status" value="1"/>
</dbReference>
<dbReference type="Gene3D" id="3.40.50.620">
    <property type="entry name" value="HUPs"/>
    <property type="match status" value="1"/>
</dbReference>
<dbReference type="HAMAP" id="MF_00064">
    <property type="entry name" value="Sulf_adenylyltr_sub2"/>
    <property type="match status" value="1"/>
</dbReference>
<dbReference type="InterPro" id="IPR002500">
    <property type="entry name" value="PAPS_reduct_dom"/>
</dbReference>
<dbReference type="InterPro" id="IPR014729">
    <property type="entry name" value="Rossmann-like_a/b/a_fold"/>
</dbReference>
<dbReference type="InterPro" id="IPR011784">
    <property type="entry name" value="SO4_adenylTrfase_ssu"/>
</dbReference>
<dbReference type="InterPro" id="IPR050128">
    <property type="entry name" value="Sulfate_adenylyltrnsfr_sub2"/>
</dbReference>
<dbReference type="NCBIfam" id="TIGR02039">
    <property type="entry name" value="CysD"/>
    <property type="match status" value="1"/>
</dbReference>
<dbReference type="NCBIfam" id="NF003587">
    <property type="entry name" value="PRK05253.1"/>
    <property type="match status" value="1"/>
</dbReference>
<dbReference type="NCBIfam" id="NF009214">
    <property type="entry name" value="PRK12563.1"/>
    <property type="match status" value="1"/>
</dbReference>
<dbReference type="PANTHER" id="PTHR43196">
    <property type="entry name" value="SULFATE ADENYLYLTRANSFERASE SUBUNIT 2"/>
    <property type="match status" value="1"/>
</dbReference>
<dbReference type="PANTHER" id="PTHR43196:SF1">
    <property type="entry name" value="SULFATE ADENYLYLTRANSFERASE SUBUNIT 2"/>
    <property type="match status" value="1"/>
</dbReference>
<dbReference type="Pfam" id="PF01507">
    <property type="entry name" value="PAPS_reduct"/>
    <property type="match status" value="1"/>
</dbReference>
<dbReference type="PIRSF" id="PIRSF002936">
    <property type="entry name" value="CysDAde_trans"/>
    <property type="match status" value="1"/>
</dbReference>
<dbReference type="SUPFAM" id="SSF52402">
    <property type="entry name" value="Adenine nucleotide alpha hydrolases-like"/>
    <property type="match status" value="1"/>
</dbReference>
<reference key="1">
    <citation type="journal article" date="2005" name="Proc. Natl. Acad. Sci. U.S.A.">
        <title>Comparison of the complete genome sequences of Pseudomonas syringae pv. syringae B728a and pv. tomato DC3000.</title>
        <authorList>
            <person name="Feil H."/>
            <person name="Feil W.S."/>
            <person name="Chain P."/>
            <person name="Larimer F."/>
            <person name="Dibartolo G."/>
            <person name="Copeland A."/>
            <person name="Lykidis A."/>
            <person name="Trong S."/>
            <person name="Nolan M."/>
            <person name="Goltsman E."/>
            <person name="Thiel J."/>
            <person name="Malfatti S."/>
            <person name="Loper J.E."/>
            <person name="Lapidus A."/>
            <person name="Detter J.C."/>
            <person name="Land M."/>
            <person name="Richardson P.M."/>
            <person name="Kyrpides N.C."/>
            <person name="Ivanova N."/>
            <person name="Lindow S.E."/>
        </authorList>
    </citation>
    <scope>NUCLEOTIDE SEQUENCE [LARGE SCALE GENOMIC DNA]</scope>
    <source>
        <strain>B728a</strain>
    </source>
</reference>
<comment type="function">
    <text evidence="1">With CysN forms the ATP sulfurylase (ATPS) that catalyzes the adenylation of sulfate producing adenosine 5'-phosphosulfate (APS) and diphosphate, the first enzymatic step in sulfur assimilation pathway. APS synthesis involves the formation of a high-energy phosphoric-sulfuric acid anhydride bond driven by GTP hydrolysis by CysN coupled to ATP hydrolysis by CysD.</text>
</comment>
<comment type="catalytic activity">
    <reaction evidence="1">
        <text>sulfate + ATP + H(+) = adenosine 5'-phosphosulfate + diphosphate</text>
        <dbReference type="Rhea" id="RHEA:18133"/>
        <dbReference type="ChEBI" id="CHEBI:15378"/>
        <dbReference type="ChEBI" id="CHEBI:16189"/>
        <dbReference type="ChEBI" id="CHEBI:30616"/>
        <dbReference type="ChEBI" id="CHEBI:33019"/>
        <dbReference type="ChEBI" id="CHEBI:58243"/>
        <dbReference type="EC" id="2.7.7.4"/>
    </reaction>
</comment>
<comment type="pathway">
    <text evidence="1">Sulfur metabolism; hydrogen sulfide biosynthesis; sulfite from sulfate: step 1/3.</text>
</comment>
<comment type="subunit">
    <text evidence="1">Heterodimer composed of CysD, the smaller subunit, and CysN.</text>
</comment>
<comment type="similarity">
    <text evidence="1">Belongs to the PAPS reductase family. CysD subfamily.</text>
</comment>
<proteinExistence type="inferred from homology"/>
<evidence type="ECO:0000255" key="1">
    <source>
        <dbReference type="HAMAP-Rule" id="MF_00064"/>
    </source>
</evidence>
<keyword id="KW-0067">ATP-binding</keyword>
<keyword id="KW-0547">Nucleotide-binding</keyword>
<keyword id="KW-0548">Nucleotidyltransferase</keyword>
<keyword id="KW-0808">Transferase</keyword>
<organism>
    <name type="scientific">Pseudomonas syringae pv. syringae (strain B728a)</name>
    <dbReference type="NCBI Taxonomy" id="205918"/>
    <lineage>
        <taxon>Bacteria</taxon>
        <taxon>Pseudomonadati</taxon>
        <taxon>Pseudomonadota</taxon>
        <taxon>Gammaproteobacteria</taxon>
        <taxon>Pseudomonadales</taxon>
        <taxon>Pseudomonadaceae</taxon>
        <taxon>Pseudomonas</taxon>
        <taxon>Pseudomonas syringae</taxon>
    </lineage>
</organism>
<sequence length="305" mass="35312">MVDKLTHLKQLEAESIHIIREVAAEFDNPVMLYSIGKDSAVMLHLARKAFFPGKLPFPVMHVDTRWKFQEMYRFRDQMVEEMGLDLITHINPDGVAQGINPFTHGSAKHTDIMKTEGLKQALDKHGFDAAFGGARRDEEKSRAKERVYSFRDSKHRWDPKNQRPELWNVYNGNVNKGESIRVFPLSNWTELDIWQYIYLEGIPIVPLYFAAERDVIEKNGTLIMIDDERILEHLTDEEKSRIVKKKVRFRTLGCYPLTGAVESEATSLTDIIQEMLLTRTSERQGRVIDHDGAGSMEEKKRQGYF</sequence>
<protein>
    <recommendedName>
        <fullName evidence="1">Sulfate adenylyltransferase subunit 2</fullName>
        <ecNumber evidence="1">2.7.7.4</ecNumber>
    </recommendedName>
    <alternativeName>
        <fullName evidence="1">ATP-sulfurylase small subunit</fullName>
    </alternativeName>
    <alternativeName>
        <fullName evidence="1">Sulfate adenylate transferase</fullName>
        <shortName evidence="1">SAT</shortName>
    </alternativeName>
</protein>
<name>CYSD_PSEU2</name>
<gene>
    <name evidence="1" type="primary">cysD</name>
    <name type="ordered locus">Psyr_4128</name>
</gene>
<accession>Q4ZNW4</accession>
<feature type="chain" id="PRO_1000008973" description="Sulfate adenylyltransferase subunit 2">
    <location>
        <begin position="1"/>
        <end position="305"/>
    </location>
</feature>